<name>IE1_HHV6U</name>
<comment type="alternative products">
    <event type="alternative splicing"/>
    <isoform>
        <id>Q69567-1</id>
        <name>2</name>
        <name>IE1 protein</name>
        <name>Protein U90-U89</name>
        <sequence type="displayed"/>
    </isoform>
    <isoform>
        <id>Q77Z83-1</id>
        <name>1</name>
        <name>IE2 protein</name>
        <name>Protein U90-U86/87</name>
        <sequence type="external"/>
    </isoform>
    <isoform>
        <id>Q77Z83-2</id>
        <name>3</name>
        <name>IE-100</name>
        <sequence type="external"/>
    </isoform>
    <isoform>
        <id>Q77Z83-3</id>
        <name>4</name>
        <name>IE-55</name>
        <sequence type="external"/>
    </isoform>
</comment>
<comment type="sequence caution" evidence="2">
    <conflict type="erroneous gene model prediction">
        <sequence resource="EMBL-CDS" id="AAA43849"/>
    </conflict>
</comment>
<comment type="sequence caution" evidence="2">
    <conflict type="erroneous gene model prediction">
        <sequence resource="EMBL-CDS" id="AAA43850"/>
    </conflict>
</comment>
<comment type="sequence caution" evidence="2">
    <conflict type="erroneous gene model prediction">
        <sequence resource="EMBL-CDS" id="AAA43851"/>
    </conflict>
</comment>
<keyword id="KW-0025">Alternative splicing</keyword>
<keyword id="KW-1185">Reference proteome</keyword>
<accession>Q69567</accession>
<accession>Q69227</accession>
<accession>Q69228</accession>
<accession>Q69229</accession>
<accession>Q69568</accession>
<proteinExistence type="predicted"/>
<reference key="1">
    <citation type="journal article" date="1991" name="J. Virol.">
        <title>Identification of a transactivating function mapping to the putative immediate-early locus of human herpesvirus 6.</title>
        <authorList>
            <person name="Martin M.E."/>
            <person name="Nicholas J."/>
            <person name="Thomson B.J."/>
            <person name="Newman C."/>
            <person name="Honess R.W."/>
        </authorList>
    </citation>
    <scope>NUCLEOTIDE SEQUENCE [GENOMIC DNA]</scope>
</reference>
<reference key="2">
    <citation type="journal article" date="1995" name="Virology">
        <title>The DNA sequence of human herpesvirus-6: structure, coding content, and genome evolution.</title>
        <authorList>
            <person name="Gompels U.A."/>
            <person name="Nicholas J."/>
            <person name="Lawrence G.L."/>
            <person name="Jones M."/>
            <person name="Thomson B.J."/>
            <person name="Martin M.E.D."/>
            <person name="Efstathiou S."/>
            <person name="Craxton M.A."/>
            <person name="Macaulay H.A."/>
        </authorList>
    </citation>
    <scope>NUCLEOTIDE SEQUENCE [LARGE SCALE GENOMIC DNA]</scope>
</reference>
<reference key="3">
    <citation type="journal article" date="2002" name="Virus Res.">
        <title>Identification and characterization of the gene products of open reading frame U86/87 of human herpesvirus 6.</title>
        <authorList>
            <person name="Papanikolaou E."/>
            <person name="Kouvatsis V."/>
            <person name="Dimitriadis G."/>
            <person name="Inoue N."/>
            <person name="Arsenakis M."/>
        </authorList>
    </citation>
    <scope>ALTERNATIVE SPLICING</scope>
</reference>
<feature type="chain" id="PRO_0000343644" description="Immediate-early protein 1">
    <location>
        <begin position="1"/>
        <end position="941"/>
    </location>
</feature>
<feature type="region of interest" description="Disordered" evidence="1">
    <location>
        <begin position="1"/>
        <end position="23"/>
    </location>
</feature>
<feature type="region of interest" description="Disordered" evidence="1">
    <location>
        <begin position="567"/>
        <end position="632"/>
    </location>
</feature>
<feature type="compositionally biased region" description="Basic and acidic residues" evidence="1">
    <location>
        <begin position="14"/>
        <end position="23"/>
    </location>
</feature>
<feature type="compositionally biased region" description="Polar residues" evidence="1">
    <location>
        <begin position="567"/>
        <end position="584"/>
    </location>
</feature>
<feature type="compositionally biased region" description="Basic residues" evidence="1">
    <location>
        <begin position="606"/>
        <end position="626"/>
    </location>
</feature>
<organismHost>
    <name type="scientific">Homo sapiens</name>
    <name type="common">Human</name>
    <dbReference type="NCBI Taxonomy" id="9606"/>
</organismHost>
<gene>
    <name type="primary">U90/U89</name>
    <name type="synonym">RF4</name>
</gene>
<dbReference type="EMBL" id="M73681">
    <property type="protein sequence ID" value="AAA43849.1"/>
    <property type="status" value="ALT_SEQ"/>
    <property type="molecule type" value="Genomic_DNA"/>
</dbReference>
<dbReference type="EMBL" id="M73681">
    <property type="protein sequence ID" value="AAA43850.1"/>
    <property type="status" value="ALT_SEQ"/>
    <property type="molecule type" value="Genomic_DNA"/>
</dbReference>
<dbReference type="EMBL" id="M73681">
    <property type="protein sequence ID" value="AAA43851.1"/>
    <property type="status" value="ALT_SEQ"/>
    <property type="molecule type" value="Genomic_DNA"/>
</dbReference>
<dbReference type="EMBL" id="X83413">
    <property type="protein sequence ID" value="CAA58339.2"/>
    <property type="molecule type" value="Genomic_DNA"/>
</dbReference>
<dbReference type="PIR" id="B40506">
    <property type="entry name" value="B40506"/>
</dbReference>
<dbReference type="PIR" id="C40506">
    <property type="entry name" value="C40506"/>
</dbReference>
<dbReference type="PIR" id="D40506">
    <property type="entry name" value="D40506"/>
</dbReference>
<dbReference type="RefSeq" id="NP_042983.2">
    <property type="nucleotide sequence ID" value="NC_001664.2"/>
</dbReference>
<dbReference type="DNASU" id="1487968"/>
<dbReference type="KEGG" id="vg:1487968"/>
<dbReference type="Proteomes" id="UP000009295">
    <property type="component" value="Segment"/>
</dbReference>
<dbReference type="InterPro" id="IPR005507">
    <property type="entry name" value="HHV6-IE"/>
</dbReference>
<dbReference type="Pfam" id="PF03753">
    <property type="entry name" value="HHV6-IE"/>
    <property type="match status" value="3"/>
</dbReference>
<evidence type="ECO:0000256" key="1">
    <source>
        <dbReference type="SAM" id="MobiDB-lite"/>
    </source>
</evidence>
<evidence type="ECO:0000305" key="2"/>
<protein>
    <recommendedName>
        <fullName>Immediate-early protein 1</fullName>
        <shortName>IE1</shortName>
    </recommendedName>
    <alternativeName>
        <fullName>Protein RF2/RF3/RF4</fullName>
    </alternativeName>
    <alternativeName>
        <fullName>pRF2/pRF3/pRF4</fullName>
    </alternativeName>
</protein>
<organism>
    <name type="scientific">Human herpesvirus 6A (strain Uganda-1102)</name>
    <name type="common">HHV-6 variant A</name>
    <name type="synonym">Human B lymphotropic virus</name>
    <dbReference type="NCBI Taxonomy" id="10370"/>
    <lineage>
        <taxon>Viruses</taxon>
        <taxon>Duplodnaviria</taxon>
        <taxon>Heunggongvirae</taxon>
        <taxon>Peploviricota</taxon>
        <taxon>Herviviricetes</taxon>
        <taxon>Herpesvirales</taxon>
        <taxon>Orthoherpesviridae</taxon>
        <taxon>Betaherpesvirinae</taxon>
        <taxon>Roseolovirus</taxon>
        <taxon>Roseolovirus humanbeta6a</taxon>
        <taxon>Human betaherpesvirus 6A</taxon>
    </lineage>
</organism>
<sequence>MEPAKPSGNNMGSNDERMQDYRPDPMMEESIKEILEESLMCDTSFDDLIIPGLESFGLIIPESSNNIESNNVEEGSDGELKTLAAQSAGNCIQSIGASVKAAMKQEQSDMEDKLIKCAGLLTQQQSMFIGLGLEQLSQLININLLSSASTKYVESYSKMLHGKELDFFNWCEPRFIVFACDKFDGLVKKVASESRNLLLDLRANMNNDIIKAVKDIFSKATVTLDCQKLNQGATMLMMMAHNKEMSNPDISSKDFCEKINTLKQTLLEGKNEIVETNAKNMQILQTFAIKQMNQIFMDGCDKAFLKLNVNCKNLITAAKNLANTILQSIVICSNEFSWQHLKLLRRGFKVTMLNMITQACECLESDYDDTGLIKPLTPLQIMDGYINMNKNRQSSICDGNTDPSDSMILDLADFDDHGRYSEESSIESIHEDDDNKMYPCTPSPEVPGKSKYVGTFTENSRQSGDEQTNPNCVGTASVTDLGGPDNLNSISGLQSCKNMLLERLLDTQCDSVVEGTEQDGSYGNTLISEMMMFGYETDHSAPYESESDNNDEIDYIANSDSAARTNNIHMNSTDENTPFSNSICSPPEVTPSKKNVKPKSMTPGSKPKKRVAKRKHVSSKSPKNKKIKTDQLPKAADVIVISSESEDEEDGDNIIGNSILIKAIKSESDSESSSESNDCTSEHKQLHLSDYDEVTNNGHCPSYGFPTPVFTIPIRSMQGTGGIKSKFIPKKNWIWYMKKTHQVDNCPIHNSENVDAKDDSDGTEAKHCFMNHFVPIKTDDEDYDKNNVSYIYNKIQNSKIDSGDIIPTKKLIIDMVMDNFMDLNDIIKQGITKHCQDLCNKYNVVTPTTCEDDLNMTNSQTFATTATQVFDPPVTGNNSSILNIINDTTSQNDENRCTEGTSNSNEKCTNISDCNSDGTEAFKLDGYPSDYDPFVENAQIY</sequence>